<dbReference type="EMBL" id="CU458896">
    <property type="protein sequence ID" value="CAM61451.1"/>
    <property type="molecule type" value="Genomic_DNA"/>
</dbReference>
<dbReference type="RefSeq" id="WP_005059662.1">
    <property type="nucleotide sequence ID" value="NZ_MLCG01000002.1"/>
</dbReference>
<dbReference type="SMR" id="B1MLM4"/>
<dbReference type="GeneID" id="93378309"/>
<dbReference type="KEGG" id="mab:MAB_1365"/>
<dbReference type="Proteomes" id="UP000007137">
    <property type="component" value="Chromosome"/>
</dbReference>
<dbReference type="GO" id="GO:0033281">
    <property type="term" value="C:TAT protein transport complex"/>
    <property type="evidence" value="ECO:0007669"/>
    <property type="project" value="UniProtKB-UniRule"/>
</dbReference>
<dbReference type="GO" id="GO:0008320">
    <property type="term" value="F:protein transmembrane transporter activity"/>
    <property type="evidence" value="ECO:0007669"/>
    <property type="project" value="UniProtKB-UniRule"/>
</dbReference>
<dbReference type="GO" id="GO:0043953">
    <property type="term" value="P:protein transport by the Tat complex"/>
    <property type="evidence" value="ECO:0007669"/>
    <property type="project" value="UniProtKB-UniRule"/>
</dbReference>
<dbReference type="Gene3D" id="1.20.5.3310">
    <property type="match status" value="1"/>
</dbReference>
<dbReference type="HAMAP" id="MF_00237">
    <property type="entry name" value="TatB"/>
    <property type="match status" value="1"/>
</dbReference>
<dbReference type="InterPro" id="IPR003369">
    <property type="entry name" value="TatA/B/E"/>
</dbReference>
<dbReference type="InterPro" id="IPR018448">
    <property type="entry name" value="TatB"/>
</dbReference>
<dbReference type="NCBIfam" id="TIGR01410">
    <property type="entry name" value="tatB"/>
    <property type="match status" value="1"/>
</dbReference>
<dbReference type="Pfam" id="PF02416">
    <property type="entry name" value="TatA_B_E"/>
    <property type="match status" value="1"/>
</dbReference>
<dbReference type="PRINTS" id="PR01506">
    <property type="entry name" value="TATBPROTEIN"/>
</dbReference>
<name>TATB_MYCA9</name>
<keyword id="KW-1003">Cell membrane</keyword>
<keyword id="KW-0472">Membrane</keyword>
<keyword id="KW-0653">Protein transport</keyword>
<keyword id="KW-1185">Reference proteome</keyword>
<keyword id="KW-0811">Translocation</keyword>
<keyword id="KW-0812">Transmembrane</keyword>
<keyword id="KW-1133">Transmembrane helix</keyword>
<keyword id="KW-0813">Transport</keyword>
<gene>
    <name evidence="1" type="primary">tatB</name>
    <name type="ordered locus">MAB_1365</name>
</gene>
<reference key="1">
    <citation type="journal article" date="2009" name="PLoS ONE">
        <title>Non mycobacterial virulence genes in the genome of the emerging pathogen Mycobacterium abscessus.</title>
        <authorList>
            <person name="Ripoll F."/>
            <person name="Pasek S."/>
            <person name="Schenowitz C."/>
            <person name="Dossat C."/>
            <person name="Barbe V."/>
            <person name="Rottman M."/>
            <person name="Macheras E."/>
            <person name="Heym B."/>
            <person name="Herrmann J.L."/>
            <person name="Daffe M."/>
            <person name="Brosch R."/>
            <person name="Risler J.L."/>
            <person name="Gaillard J.L."/>
        </authorList>
    </citation>
    <scope>NUCLEOTIDE SEQUENCE [LARGE SCALE GENOMIC DNA]</scope>
    <source>
        <strain>ATCC 19977 / DSM 44196 / CCUG 20993 / CIP 104536 / JCM 13569 / NCTC 13031 / TMC 1543 / L948</strain>
    </source>
</reference>
<evidence type="ECO:0000255" key="1">
    <source>
        <dbReference type="HAMAP-Rule" id="MF_00237"/>
    </source>
</evidence>
<evidence type="ECO:0000256" key="2">
    <source>
        <dbReference type="SAM" id="MobiDB-lite"/>
    </source>
</evidence>
<feature type="chain" id="PRO_1000100635" description="Sec-independent protein translocase protein TatB">
    <location>
        <begin position="1"/>
        <end position="136"/>
    </location>
</feature>
<feature type="transmembrane region" description="Helical" evidence="1">
    <location>
        <begin position="2"/>
        <end position="22"/>
    </location>
</feature>
<feature type="region of interest" description="Disordered" evidence="2">
    <location>
        <begin position="107"/>
        <end position="136"/>
    </location>
</feature>
<protein>
    <recommendedName>
        <fullName evidence="1">Sec-independent protein translocase protein TatB</fullName>
    </recommendedName>
</protein>
<accession>B1MLM4</accession>
<comment type="function">
    <text evidence="1">Part of the twin-arginine translocation (Tat) system that transports large folded proteins containing a characteristic twin-arginine motif in their signal peptide across membranes. Together with TatC, TatB is part of a receptor directly interacting with Tat signal peptides. TatB may form an oligomeric binding site that transiently accommodates folded Tat precursor proteins before their translocation.</text>
</comment>
<comment type="subunit">
    <text evidence="1">The Tat system comprises two distinct complexes: a TatABC complex, containing multiple copies of TatA, TatB and TatC subunits, and a separate TatA complex, containing only TatA subunits. Substrates initially bind to the TatABC complex, which probably triggers association of the separate TatA complex to form the active translocon.</text>
</comment>
<comment type="subcellular location">
    <subcellularLocation>
        <location evidence="1">Cell membrane</location>
        <topology evidence="1">Single-pass membrane protein</topology>
    </subcellularLocation>
</comment>
<comment type="similarity">
    <text evidence="1">Belongs to the TatB family.</text>
</comment>
<organism>
    <name type="scientific">Mycobacteroides abscessus (strain ATCC 19977 / DSM 44196 / CCUG 20993 / CIP 104536 / JCM 13569 / NCTC 13031 / TMC 1543 / L948)</name>
    <name type="common">Mycobacterium abscessus</name>
    <dbReference type="NCBI Taxonomy" id="561007"/>
    <lineage>
        <taxon>Bacteria</taxon>
        <taxon>Bacillati</taxon>
        <taxon>Actinomycetota</taxon>
        <taxon>Actinomycetes</taxon>
        <taxon>Mycobacteriales</taxon>
        <taxon>Mycobacteriaceae</taxon>
        <taxon>Mycobacteroides</taxon>
        <taxon>Mycobacteroides abscessus</taxon>
    </lineage>
</organism>
<proteinExistence type="inferred from homology"/>
<sequence>MFGSVGWGELLVLLIVGLVVLGPERLPGAIRWTTESLRKVRDYASGATASLREELGPEFDDVRKPLAELQKLRGMTPRAVITKHLLDGDDSVFDSLTRPLDDVKKAVTEPAPTPIVNPELAKPAEPGPTRYDADAT</sequence>